<gene>
    <name type="primary">Psd2</name>
    <name evidence="8" type="synonym">Efa6c</name>
</gene>
<name>PSD2_MOUSE</name>
<reference key="1">
    <citation type="journal article" date="2005" name="Science">
        <title>The transcriptional landscape of the mammalian genome.</title>
        <authorList>
            <person name="Carninci P."/>
            <person name="Kasukawa T."/>
            <person name="Katayama S."/>
            <person name="Gough J."/>
            <person name="Frith M.C."/>
            <person name="Maeda N."/>
            <person name="Oyama R."/>
            <person name="Ravasi T."/>
            <person name="Lenhard B."/>
            <person name="Wells C."/>
            <person name="Kodzius R."/>
            <person name="Shimokawa K."/>
            <person name="Bajic V.B."/>
            <person name="Brenner S.E."/>
            <person name="Batalov S."/>
            <person name="Forrest A.R."/>
            <person name="Zavolan M."/>
            <person name="Davis M.J."/>
            <person name="Wilming L.G."/>
            <person name="Aidinis V."/>
            <person name="Allen J.E."/>
            <person name="Ambesi-Impiombato A."/>
            <person name="Apweiler R."/>
            <person name="Aturaliya R.N."/>
            <person name="Bailey T.L."/>
            <person name="Bansal M."/>
            <person name="Baxter L."/>
            <person name="Beisel K.W."/>
            <person name="Bersano T."/>
            <person name="Bono H."/>
            <person name="Chalk A.M."/>
            <person name="Chiu K.P."/>
            <person name="Choudhary V."/>
            <person name="Christoffels A."/>
            <person name="Clutterbuck D.R."/>
            <person name="Crowe M.L."/>
            <person name="Dalla E."/>
            <person name="Dalrymple B.P."/>
            <person name="de Bono B."/>
            <person name="Della Gatta G."/>
            <person name="di Bernardo D."/>
            <person name="Down T."/>
            <person name="Engstrom P."/>
            <person name="Fagiolini M."/>
            <person name="Faulkner G."/>
            <person name="Fletcher C.F."/>
            <person name="Fukushima T."/>
            <person name="Furuno M."/>
            <person name="Futaki S."/>
            <person name="Gariboldi M."/>
            <person name="Georgii-Hemming P."/>
            <person name="Gingeras T.R."/>
            <person name="Gojobori T."/>
            <person name="Green R.E."/>
            <person name="Gustincich S."/>
            <person name="Harbers M."/>
            <person name="Hayashi Y."/>
            <person name="Hensch T.K."/>
            <person name="Hirokawa N."/>
            <person name="Hill D."/>
            <person name="Huminiecki L."/>
            <person name="Iacono M."/>
            <person name="Ikeo K."/>
            <person name="Iwama A."/>
            <person name="Ishikawa T."/>
            <person name="Jakt M."/>
            <person name="Kanapin A."/>
            <person name="Katoh M."/>
            <person name="Kawasawa Y."/>
            <person name="Kelso J."/>
            <person name="Kitamura H."/>
            <person name="Kitano H."/>
            <person name="Kollias G."/>
            <person name="Krishnan S.P."/>
            <person name="Kruger A."/>
            <person name="Kummerfeld S.K."/>
            <person name="Kurochkin I.V."/>
            <person name="Lareau L.F."/>
            <person name="Lazarevic D."/>
            <person name="Lipovich L."/>
            <person name="Liu J."/>
            <person name="Liuni S."/>
            <person name="McWilliam S."/>
            <person name="Madan Babu M."/>
            <person name="Madera M."/>
            <person name="Marchionni L."/>
            <person name="Matsuda H."/>
            <person name="Matsuzawa S."/>
            <person name="Miki H."/>
            <person name="Mignone F."/>
            <person name="Miyake S."/>
            <person name="Morris K."/>
            <person name="Mottagui-Tabar S."/>
            <person name="Mulder N."/>
            <person name="Nakano N."/>
            <person name="Nakauchi H."/>
            <person name="Ng P."/>
            <person name="Nilsson R."/>
            <person name="Nishiguchi S."/>
            <person name="Nishikawa S."/>
            <person name="Nori F."/>
            <person name="Ohara O."/>
            <person name="Okazaki Y."/>
            <person name="Orlando V."/>
            <person name="Pang K.C."/>
            <person name="Pavan W.J."/>
            <person name="Pavesi G."/>
            <person name="Pesole G."/>
            <person name="Petrovsky N."/>
            <person name="Piazza S."/>
            <person name="Reed J."/>
            <person name="Reid J.F."/>
            <person name="Ring B.Z."/>
            <person name="Ringwald M."/>
            <person name="Rost B."/>
            <person name="Ruan Y."/>
            <person name="Salzberg S.L."/>
            <person name="Sandelin A."/>
            <person name="Schneider C."/>
            <person name="Schoenbach C."/>
            <person name="Sekiguchi K."/>
            <person name="Semple C.A."/>
            <person name="Seno S."/>
            <person name="Sessa L."/>
            <person name="Sheng Y."/>
            <person name="Shibata Y."/>
            <person name="Shimada H."/>
            <person name="Shimada K."/>
            <person name="Silva D."/>
            <person name="Sinclair B."/>
            <person name="Sperling S."/>
            <person name="Stupka E."/>
            <person name="Sugiura K."/>
            <person name="Sultana R."/>
            <person name="Takenaka Y."/>
            <person name="Taki K."/>
            <person name="Tammoja K."/>
            <person name="Tan S.L."/>
            <person name="Tang S."/>
            <person name="Taylor M.S."/>
            <person name="Tegner J."/>
            <person name="Teichmann S.A."/>
            <person name="Ueda H.R."/>
            <person name="van Nimwegen E."/>
            <person name="Verardo R."/>
            <person name="Wei C.L."/>
            <person name="Yagi K."/>
            <person name="Yamanishi H."/>
            <person name="Zabarovsky E."/>
            <person name="Zhu S."/>
            <person name="Zimmer A."/>
            <person name="Hide W."/>
            <person name="Bult C."/>
            <person name="Grimmond S.M."/>
            <person name="Teasdale R.D."/>
            <person name="Liu E.T."/>
            <person name="Brusic V."/>
            <person name="Quackenbush J."/>
            <person name="Wahlestedt C."/>
            <person name="Mattick J.S."/>
            <person name="Hume D.A."/>
            <person name="Kai C."/>
            <person name="Sasaki D."/>
            <person name="Tomaru Y."/>
            <person name="Fukuda S."/>
            <person name="Kanamori-Katayama M."/>
            <person name="Suzuki M."/>
            <person name="Aoki J."/>
            <person name="Arakawa T."/>
            <person name="Iida J."/>
            <person name="Imamura K."/>
            <person name="Itoh M."/>
            <person name="Kato T."/>
            <person name="Kawaji H."/>
            <person name="Kawagashira N."/>
            <person name="Kawashima T."/>
            <person name="Kojima M."/>
            <person name="Kondo S."/>
            <person name="Konno H."/>
            <person name="Nakano K."/>
            <person name="Ninomiya N."/>
            <person name="Nishio T."/>
            <person name="Okada M."/>
            <person name="Plessy C."/>
            <person name="Shibata K."/>
            <person name="Shiraki T."/>
            <person name="Suzuki S."/>
            <person name="Tagami M."/>
            <person name="Waki K."/>
            <person name="Watahiki A."/>
            <person name="Okamura-Oho Y."/>
            <person name="Suzuki H."/>
            <person name="Kawai J."/>
            <person name="Hayashizaki Y."/>
        </authorList>
    </citation>
    <scope>NUCLEOTIDE SEQUENCE [LARGE SCALE MRNA] (ISOFORM 3)</scope>
    <scope>NUCLEOTIDE SEQUENCE [LARGE SCALE MRNA] OF 373-770 (ISOFORM 1)</scope>
    <source>
        <strain>C57BL/6J</strain>
        <tissue>Corpora quadrigemina</tissue>
        <tissue>Medulla oblongata</tissue>
    </source>
</reference>
<reference key="2">
    <citation type="journal article" date="2004" name="Genome Res.">
        <title>The status, quality, and expansion of the NIH full-length cDNA project: the Mammalian Gene Collection (MGC).</title>
        <authorList>
            <consortium name="The MGC Project Team"/>
        </authorList>
    </citation>
    <scope>NUCLEOTIDE SEQUENCE [LARGE SCALE MRNA] (ISOFORMS 1; 2 AND 3)</scope>
    <source>
        <strain>C57BL/6J</strain>
        <tissue>Brain</tissue>
    </source>
</reference>
<reference key="3">
    <citation type="journal article" date="2010" name="Cell">
        <title>A tissue-specific atlas of mouse protein phosphorylation and expression.</title>
        <authorList>
            <person name="Huttlin E.L."/>
            <person name="Jedrychowski M.P."/>
            <person name="Elias J.E."/>
            <person name="Goswami T."/>
            <person name="Rad R."/>
            <person name="Beausoleil S.A."/>
            <person name="Villen J."/>
            <person name="Haas W."/>
            <person name="Sowa M.E."/>
            <person name="Gygi S.P."/>
        </authorList>
    </citation>
    <scope>PHOSPHORYLATION [LARGE SCALE ANALYSIS] AT SER-188</scope>
    <scope>IDENTIFICATION BY MASS SPECTROMETRY [LARGE SCALE ANALYSIS]</scope>
    <source>
        <tissue>Brain</tissue>
    </source>
</reference>
<reference key="4">
    <citation type="journal article" date="2013" name="FEBS Lett.">
        <title>EFA6 activates Arf6 and participates in its targeting to the Flemming body during cytokinesis.</title>
        <authorList>
            <person name="Ueda T."/>
            <person name="Hanai A."/>
            <person name="Takei T."/>
            <person name="Kubo K."/>
            <person name="Ohgi M."/>
            <person name="Sakagami H."/>
            <person name="Takahashi S."/>
            <person name="Shin H.W."/>
            <person name="Nakayama K."/>
        </authorList>
    </citation>
    <scope>SUBCELLULAR LOCATION</scope>
</reference>
<keyword id="KW-0025">Alternative splicing</keyword>
<keyword id="KW-1003">Cell membrane</keyword>
<keyword id="KW-0966">Cell projection</keyword>
<keyword id="KW-0175">Coiled coil</keyword>
<keyword id="KW-0472">Membrane</keyword>
<keyword id="KW-0597">Phosphoprotein</keyword>
<keyword id="KW-1185">Reference proteome</keyword>
<keyword id="KW-0812">Transmembrane</keyword>
<keyword id="KW-1133">Transmembrane helix</keyword>
<feature type="chain" id="PRO_0000334163" description="PH and SEC7 domain-containing protein 2">
    <location>
        <begin position="1"/>
        <end position="770"/>
    </location>
</feature>
<feature type="transmembrane region" description="Helical" evidence="1">
    <location>
        <begin position="619"/>
        <end position="636"/>
    </location>
</feature>
<feature type="domain" description="SEC7" evidence="3">
    <location>
        <begin position="256"/>
        <end position="459"/>
    </location>
</feature>
<feature type="domain" description="PH" evidence="2">
    <location>
        <begin position="509"/>
        <end position="622"/>
    </location>
</feature>
<feature type="region of interest" description="Disordered" evidence="4">
    <location>
        <begin position="1"/>
        <end position="65"/>
    </location>
</feature>
<feature type="region of interest" description="Disordered" evidence="4">
    <location>
        <begin position="181"/>
        <end position="304"/>
    </location>
</feature>
<feature type="region of interest" description="Disordered" evidence="4">
    <location>
        <begin position="738"/>
        <end position="770"/>
    </location>
</feature>
<feature type="coiled-coil region" evidence="1">
    <location>
        <begin position="650"/>
        <end position="677"/>
    </location>
</feature>
<feature type="compositionally biased region" description="Basic and acidic residues" evidence="4">
    <location>
        <begin position="1"/>
        <end position="24"/>
    </location>
</feature>
<feature type="compositionally biased region" description="Polar residues" evidence="4">
    <location>
        <begin position="32"/>
        <end position="45"/>
    </location>
</feature>
<feature type="compositionally biased region" description="Low complexity" evidence="4">
    <location>
        <begin position="216"/>
        <end position="234"/>
    </location>
</feature>
<feature type="compositionally biased region" description="Low complexity" evidence="4">
    <location>
        <begin position="285"/>
        <end position="296"/>
    </location>
</feature>
<feature type="modified residue" description="Phosphoserine" evidence="10">
    <location>
        <position position="188"/>
    </location>
</feature>
<feature type="splice variant" id="VSP_033639" description="In isoform 3." evidence="6 7">
    <original>H</original>
    <variation>HV</variation>
    <location>
        <position position="420"/>
    </location>
</feature>
<feature type="splice variant" id="VSP_033640" description="In isoform 2." evidence="6">
    <original>GKRT</original>
    <variation>A</variation>
    <location>
        <begin position="526"/>
        <end position="529"/>
    </location>
</feature>
<sequence length="770" mass="84299">MDEEKLPCELHKEGSATQEDHGLEPEEEPGLQNGTAASEGLSSHISGPGGEKTLEGTMEPVRGPDVALPGLNLSLTNGLALGQDGNILEDSIEFKTWRSGPAEEEDVPGSPCPDAGDPQLGLDCPGEPDVRDGFSATFEKILESELLRGTQYSSLDSLDVLSLTDESDSCVSFEAPLTPLIQQRARDSPEAGAGLGNGDMGPEGDLGATGGCDGELGSPLRRSISSSRSENVLSHLSLTSVPNGFHEDGPGGSGGDDEDDEDTDKLLNSASDTSLKDGLSDSDSELSSSEGLEPGSTDPLANGCQGVSEAARRLARRLYHLEGFQRCDVARQLGKNNEFSRLVAGEYLSFFDFSGLTLDRALRTFLKAFPLMGETQERERVLTHFSRRYCQCNPDDSTSEDGIHTLTCALMLLNTDLHGHNIGKKMSCQQFIANLDQLNDGQDFAKDLLKTLYNSIKNEKLEWAIDEDELRKSLSELVDDKFGTGTKKVTRILDGGNPFLDVPQALNATTYKHGVLTRKTHADMDGKRTPRGRRGWKKFYAVLKGTILYLQKDEYRLDKALSEGDLKNAIRVHHALATRASDYSKKSNVLKLKTADWRVFLFQAPSKEEMLSWILRINLVAAIFSAPAFPAAVSSMKKFCRPLLPSCTTRLCQEEQLRSHENKLRQVTAELAEHRCHPLERGLKSKEAEEYRLKEHYLTFEKSRYETYIHLLAVKIKVGSDDLERIEARLATIEGDDPALRKTHSSPALSLGHGPVTGSKATKDTSASDT</sequence>
<comment type="subcellular location">
    <subcellularLocation>
        <location evidence="5">Cell membrane</location>
        <topology evidence="9">Single-pass membrane protein</topology>
    </subcellularLocation>
    <subcellularLocation>
        <location evidence="5">Cell projection</location>
        <location evidence="5">Ruffle membrane</location>
    </subcellularLocation>
    <subcellularLocation>
        <location evidence="5">Cleavage furrow</location>
    </subcellularLocation>
    <text evidence="5">In interphase associated with the plasma membrane, in particular with membrane ruffling regions. In cells undergoing cytokinesis, transiently found around the ingressing cleavage furrow. Not detected at the midbody ring/Flemming body.</text>
</comment>
<comment type="alternative products">
    <event type="alternative splicing"/>
    <isoform>
        <id>Q6P1I6-1</id>
        <name>1</name>
        <sequence type="displayed"/>
    </isoform>
    <isoform>
        <id>Q6P1I6-2</id>
        <name>2</name>
        <sequence type="described" ref="VSP_033640"/>
    </isoform>
    <isoform>
        <id>Q6P1I6-3</id>
        <name>3</name>
        <sequence type="described" ref="VSP_033639"/>
    </isoform>
</comment>
<comment type="similarity">
    <text evidence="9">Belongs to the PSD family.</text>
</comment>
<dbReference type="EMBL" id="AK018116">
    <property type="protein sequence ID" value="BAB31078.2"/>
    <property type="molecule type" value="mRNA"/>
</dbReference>
<dbReference type="EMBL" id="AK045529">
    <property type="protein sequence ID" value="BAC32407.1"/>
    <property type="molecule type" value="mRNA"/>
</dbReference>
<dbReference type="EMBL" id="BC056437">
    <property type="protein sequence ID" value="AAH56437.1"/>
    <property type="molecule type" value="mRNA"/>
</dbReference>
<dbReference type="EMBL" id="BC062930">
    <property type="protein sequence ID" value="AAH62930.1"/>
    <property type="molecule type" value="mRNA"/>
</dbReference>
<dbReference type="EMBL" id="BC065053">
    <property type="protein sequence ID" value="AAH65053.1"/>
    <property type="molecule type" value="mRNA"/>
</dbReference>
<dbReference type="EMBL" id="BC065055">
    <property type="protein sequence ID" value="AAH65055.1"/>
    <property type="molecule type" value="mRNA"/>
</dbReference>
<dbReference type="EMBL" id="BC066026">
    <property type="protein sequence ID" value="AAH66026.1"/>
    <property type="molecule type" value="mRNA"/>
</dbReference>
<dbReference type="EMBL" id="BC066036">
    <property type="protein sequence ID" value="AAH66036.1"/>
    <property type="molecule type" value="mRNA"/>
</dbReference>
<dbReference type="CCDS" id="CCDS37767.1">
    <molecule id="Q6P1I6-1"/>
</dbReference>
<dbReference type="CCDS" id="CCDS79612.1">
    <molecule id="Q6P1I6-2"/>
</dbReference>
<dbReference type="RefSeq" id="NP_001276531.1">
    <molecule id="Q6P1I6-2"/>
    <property type="nucleotide sequence ID" value="NM_001289602.1"/>
</dbReference>
<dbReference type="RefSeq" id="NP_082983.3">
    <molecule id="Q6P1I6-1"/>
    <property type="nucleotide sequence ID" value="NM_028707.4"/>
</dbReference>
<dbReference type="RefSeq" id="XP_017173484.1">
    <property type="nucleotide sequence ID" value="XM_017317995.1"/>
</dbReference>
<dbReference type="RefSeq" id="XP_030106480.1">
    <molecule id="Q6P1I6-1"/>
    <property type="nucleotide sequence ID" value="XM_030250620.2"/>
</dbReference>
<dbReference type="RefSeq" id="XP_036017188.1">
    <molecule id="Q6P1I6-3"/>
    <property type="nucleotide sequence ID" value="XM_036161295.1"/>
</dbReference>
<dbReference type="SMR" id="Q6P1I6"/>
<dbReference type="BioGRID" id="216414">
    <property type="interactions" value="1"/>
</dbReference>
<dbReference type="FunCoup" id="Q6P1I6">
    <property type="interactions" value="621"/>
</dbReference>
<dbReference type="IntAct" id="Q6P1I6">
    <property type="interactions" value="1"/>
</dbReference>
<dbReference type="STRING" id="10090.ENSMUSP00000111381"/>
<dbReference type="iPTMnet" id="Q6P1I6"/>
<dbReference type="PhosphoSitePlus" id="Q6P1I6"/>
<dbReference type="PaxDb" id="10090-ENSMUSP00000111381"/>
<dbReference type="PeptideAtlas" id="Q6P1I6"/>
<dbReference type="ProteomicsDB" id="301860">
    <molecule id="Q6P1I6-1"/>
</dbReference>
<dbReference type="ProteomicsDB" id="301861">
    <molecule id="Q6P1I6-2"/>
</dbReference>
<dbReference type="ProteomicsDB" id="301862">
    <molecule id="Q6P1I6-3"/>
</dbReference>
<dbReference type="Antibodypedia" id="45396">
    <property type="antibodies" value="29 antibodies from 17 providers"/>
</dbReference>
<dbReference type="DNASU" id="74002"/>
<dbReference type="Ensembl" id="ENSMUST00000115716.9">
    <molecule id="Q6P1I6-1"/>
    <property type="protein sequence ID" value="ENSMUSP00000111381.3"/>
    <property type="gene ID" value="ENSMUSG00000024347.17"/>
</dbReference>
<dbReference type="Ensembl" id="ENSMUST00000175734.2">
    <molecule id="Q6P1I6-3"/>
    <property type="protein sequence ID" value="ENSMUSP00000135795.2"/>
    <property type="gene ID" value="ENSMUSG00000024347.17"/>
</dbReference>
<dbReference type="Ensembl" id="ENSMUST00000176873.8">
    <molecule id="Q6P1I6-3"/>
    <property type="protein sequence ID" value="ENSMUSP00000135616.2"/>
    <property type="gene ID" value="ENSMUSG00000024347.17"/>
</dbReference>
<dbReference type="Ensembl" id="ENSMUST00000177432.8">
    <molecule id="Q6P1I6-2"/>
    <property type="protein sequence ID" value="ENSMUSP00000135431.2"/>
    <property type="gene ID" value="ENSMUSG00000024347.17"/>
</dbReference>
<dbReference type="GeneID" id="74002"/>
<dbReference type="KEGG" id="mmu:74002"/>
<dbReference type="UCSC" id="uc008ena.3">
    <molecule id="Q6P1I6-1"/>
    <property type="organism name" value="mouse"/>
</dbReference>
<dbReference type="UCSC" id="uc008enb.3">
    <molecule id="Q6P1I6-2"/>
    <property type="organism name" value="mouse"/>
</dbReference>
<dbReference type="AGR" id="MGI:1921252"/>
<dbReference type="CTD" id="84249"/>
<dbReference type="MGI" id="MGI:1921252">
    <property type="gene designation" value="Psd2"/>
</dbReference>
<dbReference type="VEuPathDB" id="HostDB:ENSMUSG00000024347"/>
<dbReference type="eggNOG" id="KOG0932">
    <property type="taxonomic scope" value="Eukaryota"/>
</dbReference>
<dbReference type="GeneTree" id="ENSGT00940000159674"/>
<dbReference type="HOGENOM" id="CLU_011021_4_0_1"/>
<dbReference type="InParanoid" id="Q6P1I6"/>
<dbReference type="OMA" id="PKETHDK"/>
<dbReference type="OrthoDB" id="2157641at2759"/>
<dbReference type="PhylomeDB" id="Q6P1I6"/>
<dbReference type="TreeFam" id="TF319755"/>
<dbReference type="BioGRID-ORCS" id="74002">
    <property type="hits" value="2 hits in 76 CRISPR screens"/>
</dbReference>
<dbReference type="ChiTaRS" id="Psd2">
    <property type="organism name" value="mouse"/>
</dbReference>
<dbReference type="PRO" id="PR:Q6P1I6"/>
<dbReference type="Proteomes" id="UP000000589">
    <property type="component" value="Chromosome 18"/>
</dbReference>
<dbReference type="RNAct" id="Q6P1I6">
    <property type="molecule type" value="protein"/>
</dbReference>
<dbReference type="Bgee" id="ENSMUSG00000024347">
    <property type="expression patterns" value="Expressed in cerebellum lobe and 108 other cell types or tissues"/>
</dbReference>
<dbReference type="ExpressionAtlas" id="Q6P1I6">
    <property type="expression patterns" value="baseline and differential"/>
</dbReference>
<dbReference type="GO" id="GO:0032154">
    <property type="term" value="C:cleavage furrow"/>
    <property type="evidence" value="ECO:0000314"/>
    <property type="project" value="UniProtKB"/>
</dbReference>
<dbReference type="GO" id="GO:0030425">
    <property type="term" value="C:dendrite"/>
    <property type="evidence" value="ECO:0000314"/>
    <property type="project" value="MGI"/>
</dbReference>
<dbReference type="GO" id="GO:0098978">
    <property type="term" value="C:glutamatergic synapse"/>
    <property type="evidence" value="ECO:0000314"/>
    <property type="project" value="SynGO"/>
</dbReference>
<dbReference type="GO" id="GO:0043025">
    <property type="term" value="C:neuronal cell body"/>
    <property type="evidence" value="ECO:0000314"/>
    <property type="project" value="MGI"/>
</dbReference>
<dbReference type="GO" id="GO:0098794">
    <property type="term" value="C:postsynapse"/>
    <property type="evidence" value="ECO:0000314"/>
    <property type="project" value="SynGO"/>
</dbReference>
<dbReference type="GO" id="GO:0032587">
    <property type="term" value="C:ruffle membrane"/>
    <property type="evidence" value="ECO:0000314"/>
    <property type="project" value="UniProtKB"/>
</dbReference>
<dbReference type="GO" id="GO:0005085">
    <property type="term" value="F:guanyl-nucleotide exchange factor activity"/>
    <property type="evidence" value="ECO:0007669"/>
    <property type="project" value="InterPro"/>
</dbReference>
<dbReference type="GO" id="GO:0005543">
    <property type="term" value="F:phospholipid binding"/>
    <property type="evidence" value="ECO:0007669"/>
    <property type="project" value="InterPro"/>
</dbReference>
<dbReference type="GO" id="GO:0032012">
    <property type="term" value="P:regulation of ARF protein signal transduction"/>
    <property type="evidence" value="ECO:0007669"/>
    <property type="project" value="InterPro"/>
</dbReference>
<dbReference type="CDD" id="cd13295">
    <property type="entry name" value="PH_EFA6"/>
    <property type="match status" value="1"/>
</dbReference>
<dbReference type="CDD" id="cd00171">
    <property type="entry name" value="Sec7"/>
    <property type="match status" value="1"/>
</dbReference>
<dbReference type="FunFam" id="1.10.1000.11:FF:000004">
    <property type="entry name" value="PH and SEC7 domain-containing protein 2"/>
    <property type="match status" value="1"/>
</dbReference>
<dbReference type="FunFam" id="2.30.29.30:FF:000054">
    <property type="entry name" value="PH and SEC7 domain-containing protein 3"/>
    <property type="match status" value="1"/>
</dbReference>
<dbReference type="Gene3D" id="1.10.1000.11">
    <property type="entry name" value="Arf Nucleotide-binding Site Opener,domain 2"/>
    <property type="match status" value="1"/>
</dbReference>
<dbReference type="Gene3D" id="2.30.29.30">
    <property type="entry name" value="Pleckstrin-homology domain (PH domain)/Phosphotyrosine-binding domain (PTB)"/>
    <property type="match status" value="1"/>
</dbReference>
<dbReference type="InterPro" id="IPR011993">
    <property type="entry name" value="PH-like_dom_sf"/>
</dbReference>
<dbReference type="InterPro" id="IPR041681">
    <property type="entry name" value="PH_9"/>
</dbReference>
<dbReference type="InterPro" id="IPR001605">
    <property type="entry name" value="PH_dom-spectrin-type"/>
</dbReference>
<dbReference type="InterPro" id="IPR001849">
    <property type="entry name" value="PH_domain"/>
</dbReference>
<dbReference type="InterPro" id="IPR023394">
    <property type="entry name" value="Sec7_C_sf"/>
</dbReference>
<dbReference type="InterPro" id="IPR000904">
    <property type="entry name" value="Sec7_dom"/>
</dbReference>
<dbReference type="InterPro" id="IPR035999">
    <property type="entry name" value="Sec7_dom_sf"/>
</dbReference>
<dbReference type="PANTHER" id="PTHR10663">
    <property type="entry name" value="GUANYL-NUCLEOTIDE EXCHANGE FACTOR"/>
    <property type="match status" value="1"/>
</dbReference>
<dbReference type="PANTHER" id="PTHR10663:SF329">
    <property type="entry name" value="PH AND SEC7 DOMAIN-CONTAINING PROTEIN 2"/>
    <property type="match status" value="1"/>
</dbReference>
<dbReference type="Pfam" id="PF15410">
    <property type="entry name" value="PH_9"/>
    <property type="match status" value="1"/>
</dbReference>
<dbReference type="Pfam" id="PF01369">
    <property type="entry name" value="Sec7"/>
    <property type="match status" value="1"/>
</dbReference>
<dbReference type="PRINTS" id="PR00683">
    <property type="entry name" value="SPECTRINPH"/>
</dbReference>
<dbReference type="SMART" id="SM00233">
    <property type="entry name" value="PH"/>
    <property type="match status" value="1"/>
</dbReference>
<dbReference type="SMART" id="SM00222">
    <property type="entry name" value="Sec7"/>
    <property type="match status" value="1"/>
</dbReference>
<dbReference type="SUPFAM" id="SSF50729">
    <property type="entry name" value="PH domain-like"/>
    <property type="match status" value="1"/>
</dbReference>
<dbReference type="SUPFAM" id="SSF48425">
    <property type="entry name" value="Sec7 domain"/>
    <property type="match status" value="1"/>
</dbReference>
<dbReference type="PROSITE" id="PS50003">
    <property type="entry name" value="PH_DOMAIN"/>
    <property type="match status" value="1"/>
</dbReference>
<dbReference type="PROSITE" id="PS50190">
    <property type="entry name" value="SEC7"/>
    <property type="match status" value="1"/>
</dbReference>
<accession>Q6P1I6</accession>
<accession>Q6NZP0</accession>
<accession>Q6PHQ7</accession>
<accession>Q8BHR9</accession>
<accession>Q9D3B8</accession>
<protein>
    <recommendedName>
        <fullName>PH and SEC7 domain-containing protein 2</fullName>
    </recommendedName>
    <alternativeName>
        <fullName>Exchange factor for ADP-ribosylation factor guanine nucleotide factor 6 C</fullName>
        <shortName>Exchange factor for ARF6 C</shortName>
    </alternativeName>
    <alternativeName>
        <fullName>Pleckstrin homology and SEC7 domain-containing protein 2</fullName>
    </alternativeName>
</protein>
<proteinExistence type="evidence at protein level"/>
<organism>
    <name type="scientific">Mus musculus</name>
    <name type="common">Mouse</name>
    <dbReference type="NCBI Taxonomy" id="10090"/>
    <lineage>
        <taxon>Eukaryota</taxon>
        <taxon>Metazoa</taxon>
        <taxon>Chordata</taxon>
        <taxon>Craniata</taxon>
        <taxon>Vertebrata</taxon>
        <taxon>Euteleostomi</taxon>
        <taxon>Mammalia</taxon>
        <taxon>Eutheria</taxon>
        <taxon>Euarchontoglires</taxon>
        <taxon>Glires</taxon>
        <taxon>Rodentia</taxon>
        <taxon>Myomorpha</taxon>
        <taxon>Muroidea</taxon>
        <taxon>Muridae</taxon>
        <taxon>Murinae</taxon>
        <taxon>Mus</taxon>
        <taxon>Mus</taxon>
    </lineage>
</organism>
<evidence type="ECO:0000255" key="1"/>
<evidence type="ECO:0000255" key="2">
    <source>
        <dbReference type="PROSITE-ProRule" id="PRU00145"/>
    </source>
</evidence>
<evidence type="ECO:0000255" key="3">
    <source>
        <dbReference type="PROSITE-ProRule" id="PRU00189"/>
    </source>
</evidence>
<evidence type="ECO:0000256" key="4">
    <source>
        <dbReference type="SAM" id="MobiDB-lite"/>
    </source>
</evidence>
<evidence type="ECO:0000269" key="5">
    <source>
    </source>
</evidence>
<evidence type="ECO:0000303" key="6">
    <source>
    </source>
</evidence>
<evidence type="ECO:0000303" key="7">
    <source>
    </source>
</evidence>
<evidence type="ECO:0000303" key="8">
    <source>
    </source>
</evidence>
<evidence type="ECO:0000305" key="9"/>
<evidence type="ECO:0007744" key="10">
    <source>
    </source>
</evidence>